<dbReference type="EC" id="2.1.1.199" evidence="1"/>
<dbReference type="EMBL" id="BX640449">
    <property type="protein sequence ID" value="CAE34569.1"/>
    <property type="molecule type" value="Genomic_DNA"/>
</dbReference>
<dbReference type="RefSeq" id="WP_003814582.1">
    <property type="nucleotide sequence ID" value="NC_002927.3"/>
</dbReference>
<dbReference type="SMR" id="Q7WFR5"/>
<dbReference type="GeneID" id="93205548"/>
<dbReference type="KEGG" id="bbr:BB4205"/>
<dbReference type="eggNOG" id="COG0275">
    <property type="taxonomic scope" value="Bacteria"/>
</dbReference>
<dbReference type="HOGENOM" id="CLU_038422_2_0_4"/>
<dbReference type="Proteomes" id="UP000001027">
    <property type="component" value="Chromosome"/>
</dbReference>
<dbReference type="GO" id="GO:0005737">
    <property type="term" value="C:cytoplasm"/>
    <property type="evidence" value="ECO:0007669"/>
    <property type="project" value="UniProtKB-SubCell"/>
</dbReference>
<dbReference type="GO" id="GO:0071424">
    <property type="term" value="F:rRNA (cytosine-N4-)-methyltransferase activity"/>
    <property type="evidence" value="ECO:0007669"/>
    <property type="project" value="UniProtKB-UniRule"/>
</dbReference>
<dbReference type="GO" id="GO:0070475">
    <property type="term" value="P:rRNA base methylation"/>
    <property type="evidence" value="ECO:0007669"/>
    <property type="project" value="UniProtKB-UniRule"/>
</dbReference>
<dbReference type="CDD" id="cd02440">
    <property type="entry name" value="AdoMet_MTases"/>
    <property type="match status" value="1"/>
</dbReference>
<dbReference type="Gene3D" id="1.10.150.170">
    <property type="entry name" value="Putative methyltransferase TM0872, insert domain"/>
    <property type="match status" value="1"/>
</dbReference>
<dbReference type="Gene3D" id="3.40.50.150">
    <property type="entry name" value="Vaccinia Virus protein VP39"/>
    <property type="match status" value="1"/>
</dbReference>
<dbReference type="HAMAP" id="MF_01007">
    <property type="entry name" value="16SrRNA_methyltr_H"/>
    <property type="match status" value="1"/>
</dbReference>
<dbReference type="InterPro" id="IPR002903">
    <property type="entry name" value="RsmH"/>
</dbReference>
<dbReference type="InterPro" id="IPR023397">
    <property type="entry name" value="SAM-dep_MeTrfase_MraW_recog"/>
</dbReference>
<dbReference type="InterPro" id="IPR029063">
    <property type="entry name" value="SAM-dependent_MTases_sf"/>
</dbReference>
<dbReference type="NCBIfam" id="TIGR00006">
    <property type="entry name" value="16S rRNA (cytosine(1402)-N(4))-methyltransferase RsmH"/>
    <property type="match status" value="1"/>
</dbReference>
<dbReference type="PANTHER" id="PTHR11265:SF0">
    <property type="entry name" value="12S RRNA N4-METHYLCYTIDINE METHYLTRANSFERASE"/>
    <property type="match status" value="1"/>
</dbReference>
<dbReference type="PANTHER" id="PTHR11265">
    <property type="entry name" value="S-ADENOSYL-METHYLTRANSFERASE MRAW"/>
    <property type="match status" value="1"/>
</dbReference>
<dbReference type="Pfam" id="PF01795">
    <property type="entry name" value="Methyltransf_5"/>
    <property type="match status" value="1"/>
</dbReference>
<dbReference type="PIRSF" id="PIRSF004486">
    <property type="entry name" value="MraW"/>
    <property type="match status" value="1"/>
</dbReference>
<dbReference type="SUPFAM" id="SSF81799">
    <property type="entry name" value="Putative methyltransferase TM0872, insert domain"/>
    <property type="match status" value="1"/>
</dbReference>
<dbReference type="SUPFAM" id="SSF53335">
    <property type="entry name" value="S-adenosyl-L-methionine-dependent methyltransferases"/>
    <property type="match status" value="1"/>
</dbReference>
<feature type="chain" id="PRO_0000108584" description="Ribosomal RNA small subunit methyltransferase H">
    <location>
        <begin position="1"/>
        <end position="364"/>
    </location>
</feature>
<feature type="region of interest" description="Disordered" evidence="2">
    <location>
        <begin position="333"/>
        <end position="364"/>
    </location>
</feature>
<feature type="binding site" evidence="1">
    <location>
        <begin position="55"/>
        <end position="57"/>
    </location>
    <ligand>
        <name>S-adenosyl-L-methionine</name>
        <dbReference type="ChEBI" id="CHEBI:59789"/>
    </ligand>
</feature>
<feature type="binding site" evidence="1">
    <location>
        <position position="75"/>
    </location>
    <ligand>
        <name>S-adenosyl-L-methionine</name>
        <dbReference type="ChEBI" id="CHEBI:59789"/>
    </ligand>
</feature>
<feature type="binding site" evidence="1">
    <location>
        <position position="101"/>
    </location>
    <ligand>
        <name>S-adenosyl-L-methionine</name>
        <dbReference type="ChEBI" id="CHEBI:59789"/>
    </ligand>
</feature>
<feature type="binding site" evidence="1">
    <location>
        <position position="122"/>
    </location>
    <ligand>
        <name>S-adenosyl-L-methionine</name>
        <dbReference type="ChEBI" id="CHEBI:59789"/>
    </ligand>
</feature>
<feature type="binding site" evidence="1">
    <location>
        <position position="129"/>
    </location>
    <ligand>
        <name>S-adenosyl-L-methionine</name>
        <dbReference type="ChEBI" id="CHEBI:59789"/>
    </ligand>
</feature>
<comment type="function">
    <text evidence="1">Specifically methylates the N4 position of cytidine in position 1402 (C1402) of 16S rRNA.</text>
</comment>
<comment type="catalytic activity">
    <reaction evidence="1">
        <text>cytidine(1402) in 16S rRNA + S-adenosyl-L-methionine = N(4)-methylcytidine(1402) in 16S rRNA + S-adenosyl-L-homocysteine + H(+)</text>
        <dbReference type="Rhea" id="RHEA:42928"/>
        <dbReference type="Rhea" id="RHEA-COMP:10286"/>
        <dbReference type="Rhea" id="RHEA-COMP:10287"/>
        <dbReference type="ChEBI" id="CHEBI:15378"/>
        <dbReference type="ChEBI" id="CHEBI:57856"/>
        <dbReference type="ChEBI" id="CHEBI:59789"/>
        <dbReference type="ChEBI" id="CHEBI:74506"/>
        <dbReference type="ChEBI" id="CHEBI:82748"/>
        <dbReference type="EC" id="2.1.1.199"/>
    </reaction>
</comment>
<comment type="subcellular location">
    <subcellularLocation>
        <location evidence="1">Cytoplasm</location>
    </subcellularLocation>
</comment>
<comment type="similarity">
    <text evidence="1">Belongs to the methyltransferase superfamily. RsmH family.</text>
</comment>
<evidence type="ECO:0000255" key="1">
    <source>
        <dbReference type="HAMAP-Rule" id="MF_01007"/>
    </source>
</evidence>
<evidence type="ECO:0000256" key="2">
    <source>
        <dbReference type="SAM" id="MobiDB-lite"/>
    </source>
</evidence>
<keyword id="KW-0963">Cytoplasm</keyword>
<keyword id="KW-0489">Methyltransferase</keyword>
<keyword id="KW-0698">rRNA processing</keyword>
<keyword id="KW-0949">S-adenosyl-L-methionine</keyword>
<keyword id="KW-0808">Transferase</keyword>
<organism>
    <name type="scientific">Bordetella bronchiseptica (strain ATCC BAA-588 / NCTC 13252 / RB50)</name>
    <name type="common">Alcaligenes bronchisepticus</name>
    <dbReference type="NCBI Taxonomy" id="257310"/>
    <lineage>
        <taxon>Bacteria</taxon>
        <taxon>Pseudomonadati</taxon>
        <taxon>Pseudomonadota</taxon>
        <taxon>Betaproteobacteria</taxon>
        <taxon>Burkholderiales</taxon>
        <taxon>Alcaligenaceae</taxon>
        <taxon>Bordetella</taxon>
    </lineage>
</organism>
<sequence length="364" mass="38866">MEFEHRPVLLEPTVDALVLPDFGGKGAHRQAGEPGPDAATRLQHGVFVDGTFGRGGHSRALLARLGAQARLVVFDKDPQAIAVARELAAGDGRVEVVHGGFATMAEELTARGIEQVDGVMLDLGVSSPQIDDAERGFSFMRDGPLDMRMDTTRGPTVADWLAQASVDEMREVIADYGEERFAFQVAKAIAACRATRPLHTTLQLAECVAGAVRTREKGQHPATRTFQALRIYINRELEELARALASALDLLGPGGRLAVISFHSLEDRMVKQCIAAAARPAAAHARLPLRESELPQPLVRSLGKVVADDVEVAGNARARSAILRVAERTGEPLPPGGGAGFVKAGRVPGEPVRGTRAGSKGRRR</sequence>
<accession>Q7WFR5</accession>
<reference key="1">
    <citation type="journal article" date="2003" name="Nat. Genet.">
        <title>Comparative analysis of the genome sequences of Bordetella pertussis, Bordetella parapertussis and Bordetella bronchiseptica.</title>
        <authorList>
            <person name="Parkhill J."/>
            <person name="Sebaihia M."/>
            <person name="Preston A."/>
            <person name="Murphy L.D."/>
            <person name="Thomson N.R."/>
            <person name="Harris D.E."/>
            <person name="Holden M.T.G."/>
            <person name="Churcher C.M."/>
            <person name="Bentley S.D."/>
            <person name="Mungall K.L."/>
            <person name="Cerdeno-Tarraga A.-M."/>
            <person name="Temple L."/>
            <person name="James K.D."/>
            <person name="Harris B."/>
            <person name="Quail M.A."/>
            <person name="Achtman M."/>
            <person name="Atkin R."/>
            <person name="Baker S."/>
            <person name="Basham D."/>
            <person name="Bason N."/>
            <person name="Cherevach I."/>
            <person name="Chillingworth T."/>
            <person name="Collins M."/>
            <person name="Cronin A."/>
            <person name="Davis P."/>
            <person name="Doggett J."/>
            <person name="Feltwell T."/>
            <person name="Goble A."/>
            <person name="Hamlin N."/>
            <person name="Hauser H."/>
            <person name="Holroyd S."/>
            <person name="Jagels K."/>
            <person name="Leather S."/>
            <person name="Moule S."/>
            <person name="Norberczak H."/>
            <person name="O'Neil S."/>
            <person name="Ormond D."/>
            <person name="Price C."/>
            <person name="Rabbinowitsch E."/>
            <person name="Rutter S."/>
            <person name="Sanders M."/>
            <person name="Saunders D."/>
            <person name="Seeger K."/>
            <person name="Sharp S."/>
            <person name="Simmonds M."/>
            <person name="Skelton J."/>
            <person name="Squares R."/>
            <person name="Squares S."/>
            <person name="Stevens K."/>
            <person name="Unwin L."/>
            <person name="Whitehead S."/>
            <person name="Barrell B.G."/>
            <person name="Maskell D.J."/>
        </authorList>
    </citation>
    <scope>NUCLEOTIDE SEQUENCE [LARGE SCALE GENOMIC DNA]</scope>
    <source>
        <strain>ATCC BAA-588 / NCTC 13252 / RB50</strain>
    </source>
</reference>
<gene>
    <name evidence="1" type="primary">rsmH</name>
    <name type="synonym">mraW</name>
    <name type="ordered locus">BB4205</name>
</gene>
<proteinExistence type="inferred from homology"/>
<name>RSMH_BORBR</name>
<protein>
    <recommendedName>
        <fullName evidence="1">Ribosomal RNA small subunit methyltransferase H</fullName>
        <ecNumber evidence="1">2.1.1.199</ecNumber>
    </recommendedName>
    <alternativeName>
        <fullName evidence="1">16S rRNA m(4)C1402 methyltransferase</fullName>
    </alternativeName>
    <alternativeName>
        <fullName evidence="1">rRNA (cytosine-N(4)-)-methyltransferase RsmH</fullName>
    </alternativeName>
</protein>